<name>RL11_TRIV2</name>
<reference key="1">
    <citation type="journal article" date="2014" name="Stand. Genomic Sci.">
        <title>Complete genome sequence of Anabaena variabilis ATCC 29413.</title>
        <authorList>
            <person name="Thiel T."/>
            <person name="Pratte B.S."/>
            <person name="Zhong J."/>
            <person name="Goodwin L."/>
            <person name="Copeland A."/>
            <person name="Lucas S."/>
            <person name="Han C."/>
            <person name="Pitluck S."/>
            <person name="Land M.L."/>
            <person name="Kyrpides N.C."/>
            <person name="Woyke T."/>
        </authorList>
    </citation>
    <scope>NUCLEOTIDE SEQUENCE [LARGE SCALE GENOMIC DNA]</scope>
    <source>
        <strain>ATCC 29413 / PCC 7937</strain>
    </source>
</reference>
<organism>
    <name type="scientific">Trichormus variabilis (strain ATCC 29413 / PCC 7937)</name>
    <name type="common">Anabaena variabilis</name>
    <dbReference type="NCBI Taxonomy" id="240292"/>
    <lineage>
        <taxon>Bacteria</taxon>
        <taxon>Bacillati</taxon>
        <taxon>Cyanobacteriota</taxon>
        <taxon>Cyanophyceae</taxon>
        <taxon>Nostocales</taxon>
        <taxon>Nostocaceae</taxon>
        <taxon>Trichormus</taxon>
    </lineage>
</organism>
<comment type="function">
    <text evidence="1">Forms part of the ribosomal stalk which helps the ribosome interact with GTP-bound translation factors.</text>
</comment>
<comment type="subunit">
    <text evidence="1">Part of the ribosomal stalk of the 50S ribosomal subunit. Interacts with L10 and the large rRNA to form the base of the stalk. L10 forms an elongated spine to which L12 dimers bind in a sequential fashion forming a multimeric L10(L12)X complex.</text>
</comment>
<comment type="PTM">
    <text evidence="1">One or more lysine residues are methylated.</text>
</comment>
<comment type="similarity">
    <text evidence="1">Belongs to the universal ribosomal protein uL11 family.</text>
</comment>
<keyword id="KW-0488">Methylation</keyword>
<keyword id="KW-0687">Ribonucleoprotein</keyword>
<keyword id="KW-0689">Ribosomal protein</keyword>
<keyword id="KW-0694">RNA-binding</keyword>
<keyword id="KW-0699">rRNA-binding</keyword>
<feature type="chain" id="PRO_0000258117" description="Large ribosomal subunit protein uL11">
    <location>
        <begin position="1"/>
        <end position="141"/>
    </location>
</feature>
<dbReference type="EMBL" id="CP000117">
    <property type="protein sequence ID" value="ABA22167.1"/>
    <property type="molecule type" value="Genomic_DNA"/>
</dbReference>
<dbReference type="RefSeq" id="WP_010999424.1">
    <property type="nucleotide sequence ID" value="NC_007413.1"/>
</dbReference>
<dbReference type="SMR" id="Q3MA19"/>
<dbReference type="STRING" id="240292.Ava_2552"/>
<dbReference type="GeneID" id="58725243"/>
<dbReference type="KEGG" id="ava:Ava_2552"/>
<dbReference type="eggNOG" id="COG0080">
    <property type="taxonomic scope" value="Bacteria"/>
</dbReference>
<dbReference type="HOGENOM" id="CLU_074237_2_2_3"/>
<dbReference type="Proteomes" id="UP000002533">
    <property type="component" value="Chromosome"/>
</dbReference>
<dbReference type="GO" id="GO:0022625">
    <property type="term" value="C:cytosolic large ribosomal subunit"/>
    <property type="evidence" value="ECO:0007669"/>
    <property type="project" value="TreeGrafter"/>
</dbReference>
<dbReference type="GO" id="GO:0070180">
    <property type="term" value="F:large ribosomal subunit rRNA binding"/>
    <property type="evidence" value="ECO:0007669"/>
    <property type="project" value="UniProtKB-UniRule"/>
</dbReference>
<dbReference type="GO" id="GO:0003735">
    <property type="term" value="F:structural constituent of ribosome"/>
    <property type="evidence" value="ECO:0007669"/>
    <property type="project" value="InterPro"/>
</dbReference>
<dbReference type="GO" id="GO:0006412">
    <property type="term" value="P:translation"/>
    <property type="evidence" value="ECO:0007669"/>
    <property type="project" value="UniProtKB-UniRule"/>
</dbReference>
<dbReference type="CDD" id="cd00349">
    <property type="entry name" value="Ribosomal_L11"/>
    <property type="match status" value="1"/>
</dbReference>
<dbReference type="FunFam" id="1.10.10.250:FF:000001">
    <property type="entry name" value="50S ribosomal protein L11"/>
    <property type="match status" value="1"/>
</dbReference>
<dbReference type="FunFam" id="3.30.1550.10:FF:000001">
    <property type="entry name" value="50S ribosomal protein L11"/>
    <property type="match status" value="1"/>
</dbReference>
<dbReference type="Gene3D" id="1.10.10.250">
    <property type="entry name" value="Ribosomal protein L11, C-terminal domain"/>
    <property type="match status" value="1"/>
</dbReference>
<dbReference type="Gene3D" id="3.30.1550.10">
    <property type="entry name" value="Ribosomal protein L11/L12, N-terminal domain"/>
    <property type="match status" value="1"/>
</dbReference>
<dbReference type="HAMAP" id="MF_00736">
    <property type="entry name" value="Ribosomal_uL11"/>
    <property type="match status" value="1"/>
</dbReference>
<dbReference type="InterPro" id="IPR000911">
    <property type="entry name" value="Ribosomal_uL11"/>
</dbReference>
<dbReference type="InterPro" id="IPR006519">
    <property type="entry name" value="Ribosomal_uL11_bac-typ"/>
</dbReference>
<dbReference type="InterPro" id="IPR020783">
    <property type="entry name" value="Ribosomal_uL11_C"/>
</dbReference>
<dbReference type="InterPro" id="IPR036769">
    <property type="entry name" value="Ribosomal_uL11_C_sf"/>
</dbReference>
<dbReference type="InterPro" id="IPR020785">
    <property type="entry name" value="Ribosomal_uL11_CS"/>
</dbReference>
<dbReference type="InterPro" id="IPR020784">
    <property type="entry name" value="Ribosomal_uL11_N"/>
</dbReference>
<dbReference type="InterPro" id="IPR036796">
    <property type="entry name" value="Ribosomal_uL11_N_sf"/>
</dbReference>
<dbReference type="NCBIfam" id="TIGR01632">
    <property type="entry name" value="L11_bact"/>
    <property type="match status" value="1"/>
</dbReference>
<dbReference type="PANTHER" id="PTHR11661">
    <property type="entry name" value="60S RIBOSOMAL PROTEIN L12"/>
    <property type="match status" value="1"/>
</dbReference>
<dbReference type="PANTHER" id="PTHR11661:SF1">
    <property type="entry name" value="LARGE RIBOSOMAL SUBUNIT PROTEIN UL11M"/>
    <property type="match status" value="1"/>
</dbReference>
<dbReference type="Pfam" id="PF00298">
    <property type="entry name" value="Ribosomal_L11"/>
    <property type="match status" value="1"/>
</dbReference>
<dbReference type="Pfam" id="PF03946">
    <property type="entry name" value="Ribosomal_L11_N"/>
    <property type="match status" value="1"/>
</dbReference>
<dbReference type="SMART" id="SM00649">
    <property type="entry name" value="RL11"/>
    <property type="match status" value="1"/>
</dbReference>
<dbReference type="SUPFAM" id="SSF54747">
    <property type="entry name" value="Ribosomal L11/L12e N-terminal domain"/>
    <property type="match status" value="1"/>
</dbReference>
<dbReference type="SUPFAM" id="SSF46906">
    <property type="entry name" value="Ribosomal protein L11, C-terminal domain"/>
    <property type="match status" value="1"/>
</dbReference>
<dbReference type="PROSITE" id="PS00359">
    <property type="entry name" value="RIBOSOMAL_L11"/>
    <property type="match status" value="1"/>
</dbReference>
<proteinExistence type="inferred from homology"/>
<sequence>MAKKVVAVIKLALNAGKANPAPPVGPALGQHGVNIMMFCKEYNAKTADQAGMVIPVEISVYEDRSFTFVLKTPPASVLIRKAAKIERGSNEPNKKKVGTITTAQLREIAQTKLPDLNANDIDAAMKIVAGTARNMGVTVTD</sequence>
<accession>Q3MA19</accession>
<gene>
    <name evidence="1" type="primary">rplK</name>
    <name evidence="1" type="synonym">rpl11</name>
    <name type="ordered locus">Ava_2552</name>
</gene>
<evidence type="ECO:0000255" key="1">
    <source>
        <dbReference type="HAMAP-Rule" id="MF_00736"/>
    </source>
</evidence>
<evidence type="ECO:0000305" key="2"/>
<protein>
    <recommendedName>
        <fullName evidence="1">Large ribosomal subunit protein uL11</fullName>
    </recommendedName>
    <alternativeName>
        <fullName evidence="2">50S ribosomal protein L11</fullName>
    </alternativeName>
</protein>